<proteinExistence type="evidence at protein level"/>
<accession>Q86V15</accession>
<accession>Q078S9</accession>
<accession>Q2EN02</accession>
<accession>Q5T9S1</accession>
<accession>Q6ZNM8</accession>
<accession>Q8WX49</accession>
<accession>Q8WX50</accession>
<accession>Q9BT16</accession>
<accession>Q9NXC6</accession>
<organism>
    <name type="scientific">Homo sapiens</name>
    <name type="common">Human</name>
    <dbReference type="NCBI Taxonomy" id="9606"/>
    <lineage>
        <taxon>Eukaryota</taxon>
        <taxon>Metazoa</taxon>
        <taxon>Chordata</taxon>
        <taxon>Craniata</taxon>
        <taxon>Vertebrata</taxon>
        <taxon>Euteleostomi</taxon>
        <taxon>Mammalia</taxon>
        <taxon>Eutheria</taxon>
        <taxon>Euarchontoglires</taxon>
        <taxon>Primates</taxon>
        <taxon>Haplorrhini</taxon>
        <taxon>Catarrhini</taxon>
        <taxon>Hominidae</taxon>
        <taxon>Homo</taxon>
    </lineage>
</organism>
<protein>
    <recommendedName>
        <fullName>Zinc finger protein castor homolog 1</fullName>
    </recommendedName>
    <alternativeName>
        <fullName>Castor-related protein</fullName>
    </alternativeName>
    <alternativeName>
        <fullName>Putative survival-related protein</fullName>
    </alternativeName>
    <alternativeName>
        <fullName>Zinc finger protein 693</fullName>
    </alternativeName>
</protein>
<reference key="1">
    <citation type="journal article" date="2005" name="Cancer Res.">
        <title>Identification and characterization of survival-related gene, a novel cell survival gene controlling apoptosis and tumorigenesis.</title>
        <authorList>
            <person name="Yuan Z.-R."/>
            <person name="Wang R."/>
            <person name="Solomon J."/>
            <person name="Luo X."/>
            <person name="Sun H."/>
            <person name="Zhang L."/>
            <person name="Shi Y."/>
        </authorList>
    </citation>
    <scope>NUCLEOTIDE SEQUENCE [MRNA]</scope>
    <source>
        <tissue>Heart</tissue>
    </source>
</reference>
<reference key="2">
    <citation type="journal article" date="2006" name="Biochem. Biophys. Res. Commun.">
        <title>Molecular cloning and characterization of human Castor, a novel human gene upregulated during cell differentiation.</title>
        <authorList>
            <person name="Liu Z."/>
            <person name="Yang X."/>
            <person name="Tan F."/>
            <person name="Cullion K."/>
            <person name="Thiele C.J."/>
        </authorList>
    </citation>
    <scope>NUCLEOTIDE SEQUENCE [MRNA] (ISOFORM 1)</scope>
    <scope>SUBCELLULAR LOCATION</scope>
    <scope>TISSUE SPECIFICITY</scope>
</reference>
<reference key="3">
    <citation type="journal article" date="2006" name="Nature">
        <title>The DNA sequence and biological annotation of human chromosome 1.</title>
        <authorList>
            <person name="Gregory S.G."/>
            <person name="Barlow K.F."/>
            <person name="McLay K.E."/>
            <person name="Kaul R."/>
            <person name="Swarbreck D."/>
            <person name="Dunham A."/>
            <person name="Scott C.E."/>
            <person name="Howe K.L."/>
            <person name="Woodfine K."/>
            <person name="Spencer C.C.A."/>
            <person name="Jones M.C."/>
            <person name="Gillson C."/>
            <person name="Searle S."/>
            <person name="Zhou Y."/>
            <person name="Kokocinski F."/>
            <person name="McDonald L."/>
            <person name="Evans R."/>
            <person name="Phillips K."/>
            <person name="Atkinson A."/>
            <person name="Cooper R."/>
            <person name="Jones C."/>
            <person name="Hall R.E."/>
            <person name="Andrews T.D."/>
            <person name="Lloyd C."/>
            <person name="Ainscough R."/>
            <person name="Almeida J.P."/>
            <person name="Ambrose K.D."/>
            <person name="Anderson F."/>
            <person name="Andrew R.W."/>
            <person name="Ashwell R.I.S."/>
            <person name="Aubin K."/>
            <person name="Babbage A.K."/>
            <person name="Bagguley C.L."/>
            <person name="Bailey J."/>
            <person name="Beasley H."/>
            <person name="Bethel G."/>
            <person name="Bird C.P."/>
            <person name="Bray-Allen S."/>
            <person name="Brown J.Y."/>
            <person name="Brown A.J."/>
            <person name="Buckley D."/>
            <person name="Burton J."/>
            <person name="Bye J."/>
            <person name="Carder C."/>
            <person name="Chapman J.C."/>
            <person name="Clark S.Y."/>
            <person name="Clarke G."/>
            <person name="Clee C."/>
            <person name="Cobley V."/>
            <person name="Collier R.E."/>
            <person name="Corby N."/>
            <person name="Coville G.J."/>
            <person name="Davies J."/>
            <person name="Deadman R."/>
            <person name="Dunn M."/>
            <person name="Earthrowl M."/>
            <person name="Ellington A.G."/>
            <person name="Errington H."/>
            <person name="Frankish A."/>
            <person name="Frankland J."/>
            <person name="French L."/>
            <person name="Garner P."/>
            <person name="Garnett J."/>
            <person name="Gay L."/>
            <person name="Ghori M.R.J."/>
            <person name="Gibson R."/>
            <person name="Gilby L.M."/>
            <person name="Gillett W."/>
            <person name="Glithero R.J."/>
            <person name="Grafham D.V."/>
            <person name="Griffiths C."/>
            <person name="Griffiths-Jones S."/>
            <person name="Grocock R."/>
            <person name="Hammond S."/>
            <person name="Harrison E.S.I."/>
            <person name="Hart E."/>
            <person name="Haugen E."/>
            <person name="Heath P.D."/>
            <person name="Holmes S."/>
            <person name="Holt K."/>
            <person name="Howden P.J."/>
            <person name="Hunt A.R."/>
            <person name="Hunt S.E."/>
            <person name="Hunter G."/>
            <person name="Isherwood J."/>
            <person name="James R."/>
            <person name="Johnson C."/>
            <person name="Johnson D."/>
            <person name="Joy A."/>
            <person name="Kay M."/>
            <person name="Kershaw J.K."/>
            <person name="Kibukawa M."/>
            <person name="Kimberley A.M."/>
            <person name="King A."/>
            <person name="Knights A.J."/>
            <person name="Lad H."/>
            <person name="Laird G."/>
            <person name="Lawlor S."/>
            <person name="Leongamornlert D.A."/>
            <person name="Lloyd D.M."/>
            <person name="Loveland J."/>
            <person name="Lovell J."/>
            <person name="Lush M.J."/>
            <person name="Lyne R."/>
            <person name="Martin S."/>
            <person name="Mashreghi-Mohammadi M."/>
            <person name="Matthews L."/>
            <person name="Matthews N.S.W."/>
            <person name="McLaren S."/>
            <person name="Milne S."/>
            <person name="Mistry S."/>
            <person name="Moore M.J.F."/>
            <person name="Nickerson T."/>
            <person name="O'Dell C.N."/>
            <person name="Oliver K."/>
            <person name="Palmeiri A."/>
            <person name="Palmer S.A."/>
            <person name="Parker A."/>
            <person name="Patel D."/>
            <person name="Pearce A.V."/>
            <person name="Peck A.I."/>
            <person name="Pelan S."/>
            <person name="Phelps K."/>
            <person name="Phillimore B.J."/>
            <person name="Plumb R."/>
            <person name="Rajan J."/>
            <person name="Raymond C."/>
            <person name="Rouse G."/>
            <person name="Saenphimmachak C."/>
            <person name="Sehra H.K."/>
            <person name="Sheridan E."/>
            <person name="Shownkeen R."/>
            <person name="Sims S."/>
            <person name="Skuce C.D."/>
            <person name="Smith M."/>
            <person name="Steward C."/>
            <person name="Subramanian S."/>
            <person name="Sycamore N."/>
            <person name="Tracey A."/>
            <person name="Tromans A."/>
            <person name="Van Helmond Z."/>
            <person name="Wall M."/>
            <person name="Wallis J.M."/>
            <person name="White S."/>
            <person name="Whitehead S.L."/>
            <person name="Wilkinson J.E."/>
            <person name="Willey D.L."/>
            <person name="Williams H."/>
            <person name="Wilming L."/>
            <person name="Wray P.W."/>
            <person name="Wu Z."/>
            <person name="Coulson A."/>
            <person name="Vaudin M."/>
            <person name="Sulston J.E."/>
            <person name="Durbin R.M."/>
            <person name="Hubbard T."/>
            <person name="Wooster R."/>
            <person name="Dunham I."/>
            <person name="Carter N.P."/>
            <person name="McVean G."/>
            <person name="Ross M.T."/>
            <person name="Harrow J."/>
            <person name="Olson M.V."/>
            <person name="Beck S."/>
            <person name="Rogers J."/>
            <person name="Bentley D.R."/>
        </authorList>
    </citation>
    <scope>NUCLEOTIDE SEQUENCE [LARGE SCALE GENOMIC DNA]</scope>
</reference>
<reference key="4">
    <citation type="journal article" date="2004" name="Genome Res.">
        <title>The status, quality, and expansion of the NIH full-length cDNA project: the Mammalian Gene Collection (MGC).</title>
        <authorList>
            <consortium name="The MGC Project Team"/>
        </authorList>
    </citation>
    <scope>NUCLEOTIDE SEQUENCE [LARGE SCALE MRNA] (ISOFORM 2)</scope>
    <source>
        <tissue>Pancreas</tissue>
        <tissue>Uterus</tissue>
    </source>
</reference>
<reference key="5">
    <citation type="journal article" date="2004" name="Nat. Genet.">
        <title>Complete sequencing and characterization of 21,243 full-length human cDNAs.</title>
        <authorList>
            <person name="Ota T."/>
            <person name="Suzuki Y."/>
            <person name="Nishikawa T."/>
            <person name="Otsuki T."/>
            <person name="Sugiyama T."/>
            <person name="Irie R."/>
            <person name="Wakamatsu A."/>
            <person name="Hayashi K."/>
            <person name="Sato H."/>
            <person name="Nagai K."/>
            <person name="Kimura K."/>
            <person name="Makita H."/>
            <person name="Sekine M."/>
            <person name="Obayashi M."/>
            <person name="Nishi T."/>
            <person name="Shibahara T."/>
            <person name="Tanaka T."/>
            <person name="Ishii S."/>
            <person name="Yamamoto J."/>
            <person name="Saito K."/>
            <person name="Kawai Y."/>
            <person name="Isono Y."/>
            <person name="Nakamura Y."/>
            <person name="Nagahari K."/>
            <person name="Murakami K."/>
            <person name="Yasuda T."/>
            <person name="Iwayanagi T."/>
            <person name="Wagatsuma M."/>
            <person name="Shiratori A."/>
            <person name="Sudo H."/>
            <person name="Hosoiri T."/>
            <person name="Kaku Y."/>
            <person name="Kodaira H."/>
            <person name="Kondo H."/>
            <person name="Sugawara M."/>
            <person name="Takahashi M."/>
            <person name="Kanda K."/>
            <person name="Yokoi T."/>
            <person name="Furuya T."/>
            <person name="Kikkawa E."/>
            <person name="Omura Y."/>
            <person name="Abe K."/>
            <person name="Kamihara K."/>
            <person name="Katsuta N."/>
            <person name="Sato K."/>
            <person name="Tanikawa M."/>
            <person name="Yamazaki M."/>
            <person name="Ninomiya K."/>
            <person name="Ishibashi T."/>
            <person name="Yamashita H."/>
            <person name="Murakawa K."/>
            <person name="Fujimori K."/>
            <person name="Tanai H."/>
            <person name="Kimata M."/>
            <person name="Watanabe M."/>
            <person name="Hiraoka S."/>
            <person name="Chiba Y."/>
            <person name="Ishida S."/>
            <person name="Ono Y."/>
            <person name="Takiguchi S."/>
            <person name="Watanabe S."/>
            <person name="Yosida M."/>
            <person name="Hotuta T."/>
            <person name="Kusano J."/>
            <person name="Kanehori K."/>
            <person name="Takahashi-Fujii A."/>
            <person name="Hara H."/>
            <person name="Tanase T.-O."/>
            <person name="Nomura Y."/>
            <person name="Togiya S."/>
            <person name="Komai F."/>
            <person name="Hara R."/>
            <person name="Takeuchi K."/>
            <person name="Arita M."/>
            <person name="Imose N."/>
            <person name="Musashino K."/>
            <person name="Yuuki H."/>
            <person name="Oshima A."/>
            <person name="Sasaki N."/>
            <person name="Aotsuka S."/>
            <person name="Yoshikawa Y."/>
            <person name="Matsunawa H."/>
            <person name="Ichihara T."/>
            <person name="Shiohata N."/>
            <person name="Sano S."/>
            <person name="Moriya S."/>
            <person name="Momiyama H."/>
            <person name="Satoh N."/>
            <person name="Takami S."/>
            <person name="Terashima Y."/>
            <person name="Suzuki O."/>
            <person name="Nakagawa S."/>
            <person name="Senoh A."/>
            <person name="Mizoguchi H."/>
            <person name="Goto Y."/>
            <person name="Shimizu F."/>
            <person name="Wakebe H."/>
            <person name="Hishigaki H."/>
            <person name="Watanabe T."/>
            <person name="Sugiyama A."/>
            <person name="Takemoto M."/>
            <person name="Kawakami B."/>
            <person name="Yamazaki M."/>
            <person name="Watanabe K."/>
            <person name="Kumagai A."/>
            <person name="Itakura S."/>
            <person name="Fukuzumi Y."/>
            <person name="Fujimori Y."/>
            <person name="Komiyama M."/>
            <person name="Tashiro H."/>
            <person name="Tanigami A."/>
            <person name="Fujiwara T."/>
            <person name="Ono T."/>
            <person name="Yamada K."/>
            <person name="Fujii Y."/>
            <person name="Ozaki K."/>
            <person name="Hirao M."/>
            <person name="Ohmori Y."/>
            <person name="Kawabata A."/>
            <person name="Hikiji T."/>
            <person name="Kobatake N."/>
            <person name="Inagaki H."/>
            <person name="Ikema Y."/>
            <person name="Okamoto S."/>
            <person name="Okitani R."/>
            <person name="Kawakami T."/>
            <person name="Noguchi S."/>
            <person name="Itoh T."/>
            <person name="Shigeta K."/>
            <person name="Senba T."/>
            <person name="Matsumura K."/>
            <person name="Nakajima Y."/>
            <person name="Mizuno T."/>
            <person name="Morinaga M."/>
            <person name="Sasaki M."/>
            <person name="Togashi T."/>
            <person name="Oyama M."/>
            <person name="Hata H."/>
            <person name="Watanabe M."/>
            <person name="Komatsu T."/>
            <person name="Mizushima-Sugano J."/>
            <person name="Satoh T."/>
            <person name="Shirai Y."/>
            <person name="Takahashi Y."/>
            <person name="Nakagawa K."/>
            <person name="Okumura K."/>
            <person name="Nagase T."/>
            <person name="Nomura N."/>
            <person name="Kikuchi H."/>
            <person name="Masuho Y."/>
            <person name="Yamashita R."/>
            <person name="Nakai K."/>
            <person name="Yada T."/>
            <person name="Nakamura Y."/>
            <person name="Ohara O."/>
            <person name="Isogai T."/>
            <person name="Sugano S."/>
        </authorList>
    </citation>
    <scope>NUCLEOTIDE SEQUENCE [LARGE SCALE MRNA] OF 115-1759 (ISOFORM 2)</scope>
    <source>
        <tissue>Hepatoma</tissue>
        <tissue>Rectum</tissue>
    </source>
</reference>
<reference key="6">
    <citation type="journal article" date="2010" name="Sci. Signal.">
        <title>Quantitative phosphoproteomics reveals widespread full phosphorylation site occupancy during mitosis.</title>
        <authorList>
            <person name="Olsen J.V."/>
            <person name="Vermeulen M."/>
            <person name="Santamaria A."/>
            <person name="Kumar C."/>
            <person name="Miller M.L."/>
            <person name="Jensen L.J."/>
            <person name="Gnad F."/>
            <person name="Cox J."/>
            <person name="Jensen T.S."/>
            <person name="Nigg E.A."/>
            <person name="Brunak S."/>
            <person name="Mann M."/>
        </authorList>
    </citation>
    <scope>PHOSPHORYLATION [LARGE SCALE ANALYSIS] AT SER-981</scope>
    <scope>IDENTIFICATION BY MASS SPECTROMETRY [LARGE SCALE ANALYSIS]</scope>
    <source>
        <tissue>Cervix carcinoma</tissue>
    </source>
</reference>
<reference key="7">
    <citation type="journal article" date="2013" name="Dev. Cell">
        <title>CASZ1 promotes vascular assembly and morphogenesis through the direct regulation of an EGFL7/RhoA-mediated pathway.</title>
        <authorList>
            <person name="Charpentier M.S."/>
            <person name="Christine K.S."/>
            <person name="Amin N.M."/>
            <person name="Dorr K.M."/>
            <person name="Kushner E.J."/>
            <person name="Bautch V.L."/>
            <person name="Taylor J.M."/>
            <person name="Conlon F.L."/>
        </authorList>
    </citation>
    <scope>FUNCTION</scope>
    <scope>MISCELLANEOUS</scope>
</reference>
<reference key="8">
    <citation type="journal article" date="2016" name="Gene">
        <title>CASZ1 loss-of-function mutation associated with congenital heart disease.</title>
        <authorList>
            <person name="Huang R.T."/>
            <person name="Xue S."/>
            <person name="Wang J."/>
            <person name="Gu J.Y."/>
            <person name="Xu J.H."/>
            <person name="Li Y.J."/>
            <person name="Li N."/>
            <person name="Yang X.X."/>
            <person name="Liu H."/>
            <person name="Zhang X.D."/>
            <person name="Qu X.K."/>
            <person name="Xu Y.J."/>
            <person name="Qiu X.B."/>
            <person name="Li R.G."/>
            <person name="Yang Y.Q."/>
        </authorList>
    </citation>
    <scope>FUNCTION</scope>
    <scope>VARIANT PRO-38</scope>
    <scope>CHARACTERIZATION OF VARIANT PRO-38</scope>
</reference>
<reference key="9">
    <citation type="journal article" date="2017" name="Nat. Struct. Mol. Biol.">
        <title>Site-specific mapping of the human SUMO proteome reveals co-modification with phosphorylation.</title>
        <authorList>
            <person name="Hendriks I.A."/>
            <person name="Lyon D."/>
            <person name="Young C."/>
            <person name="Jensen L.J."/>
            <person name="Vertegaal A.C."/>
            <person name="Nielsen M.L."/>
        </authorList>
    </citation>
    <scope>SUMOYLATION [LARGE SCALE ANALYSIS] AT LYS-288 AND LYS-975</scope>
    <scope>IDENTIFICATION BY MASS SPECTROMETRY [LARGE SCALE ANALYSIS]</scope>
</reference>
<gene>
    <name type="primary">CASZ1</name>
    <name type="synonym">CST</name>
    <name type="synonym">SRG</name>
    <name type="synonym">ZNF693</name>
</gene>
<evidence type="ECO:0000250" key="1">
    <source>
        <dbReference type="UniProtKB" id="Q9CWL2"/>
    </source>
</evidence>
<evidence type="ECO:0000255" key="2">
    <source>
        <dbReference type="PROSITE-ProRule" id="PRU00042"/>
    </source>
</evidence>
<evidence type="ECO:0000256" key="3">
    <source>
        <dbReference type="SAM" id="MobiDB-lite"/>
    </source>
</evidence>
<evidence type="ECO:0000269" key="4">
    <source>
    </source>
</evidence>
<evidence type="ECO:0000269" key="5">
    <source>
    </source>
</evidence>
<evidence type="ECO:0000269" key="6">
    <source>
    </source>
</evidence>
<evidence type="ECO:0000303" key="7">
    <source>
    </source>
</evidence>
<evidence type="ECO:0000303" key="8">
    <source>
    </source>
</evidence>
<evidence type="ECO:0000305" key="9"/>
<evidence type="ECO:0007744" key="10">
    <source>
    </source>
</evidence>
<evidence type="ECO:0007744" key="11">
    <source>
    </source>
</evidence>
<comment type="function">
    <text evidence="5 6">Transcriptional activator (PubMed:23639441, PubMed:27693370). Involved in vascular assembly and morphogenesis through direct transcriptional regulation of EGFL7 (PubMed:23639441).</text>
</comment>
<comment type="subcellular location">
    <subcellularLocation>
        <location evidence="4">Nucleus</location>
    </subcellularLocation>
</comment>
<comment type="alternative products">
    <event type="alternative splicing"/>
    <isoform>
        <id>Q86V15-1</id>
        <name>1</name>
        <name>hCASZ11</name>
        <sequence type="displayed"/>
    </isoform>
    <isoform>
        <id>Q86V15-2</id>
        <name>2</name>
        <name>hCASZ5</name>
        <sequence type="described" ref="VSP_027093 VSP_027094"/>
    </isoform>
</comment>
<comment type="tissue specificity">
    <text evidence="4">Expressed in heart, lung, skeletal muscle, pancreas, testis, small intestine, and stomach, but it is not detectable in the adult brain.</text>
</comment>
<comment type="miscellaneous">
    <text>Endothelial cells depleted in CASZ1 by siRNAs display dramatic alterations in adhesion, morphology and sprouting; normal behavior can be rescued by restoration of EGFL7 expression. The defects are in part due to diminished RhoA expression and impaired focal adhesion localization.</text>
</comment>
<comment type="caution">
    <text evidence="9">According to PubMed:16322216, another protein (SRG) is encoded on the 3'-UTR of the CASZ1 gene. The existence of this protein that may play a role in apoptosis is extremely dubious despite the fact it was localized in the cytoplasm with the help of a polyclonal antibody.</text>
</comment>
<comment type="sequence caution" evidence="9">
    <conflict type="erroneous translation">
        <sequence resource="EMBL-CDS" id="ABD14411"/>
    </conflict>
    <text>Wrong choice of CDS.</text>
</comment>
<comment type="sequence caution" evidence="9">
    <conflict type="erroneous initiation">
        <sequence resource="EMBL-CDS" id="BAA91089"/>
    </conflict>
    <text>Truncated N-terminus.</text>
</comment>
<comment type="sequence caution" evidence="9">
    <conflict type="erroneous translation">
        <sequence resource="EMBL-CDS" id="BAC85474"/>
    </conflict>
    <text>Wrong choice of CDS.</text>
</comment>
<comment type="online information" name="Atlas of Genetics and Cytogenetics in Oncology and Haematology">
    <link uri="https://atlasgeneticsoncology.org/gene/45989/CASZ1"/>
</comment>
<feature type="chain" id="PRO_0000046912" description="Zinc finger protein castor homolog 1">
    <location>
        <begin position="1"/>
        <end position="1759"/>
    </location>
</feature>
<feature type="zinc finger region" description="C2H2-type 1" evidence="2">
    <location>
        <begin position="551"/>
        <end position="575"/>
    </location>
</feature>
<feature type="zinc finger region" description="C2H2-type 2" evidence="2">
    <location>
        <begin position="610"/>
        <end position="634"/>
    </location>
</feature>
<feature type="zinc finger region" description="C2H2-type 3" evidence="2">
    <location>
        <begin position="668"/>
        <end position="692"/>
    </location>
</feature>
<feature type="zinc finger region" description="C2H2-type 4" evidence="2">
    <location>
        <begin position="1031"/>
        <end position="1055"/>
    </location>
</feature>
<feature type="zinc finger region" description="C2H2-type 5" evidence="2">
    <location>
        <begin position="1300"/>
        <end position="1324"/>
    </location>
</feature>
<feature type="zinc finger region" description="C2H2-type 6" evidence="2">
    <location>
        <begin position="1457"/>
        <end position="1481"/>
    </location>
</feature>
<feature type="zinc finger region" description="C2H2-type 7" evidence="2">
    <location>
        <begin position="1515"/>
        <end position="1537"/>
    </location>
</feature>
<feature type="zinc finger region" description="C2H2-type 8" evidence="2">
    <location>
        <begin position="1571"/>
        <end position="1595"/>
    </location>
</feature>
<feature type="region of interest" description="Disordered" evidence="3">
    <location>
        <begin position="1"/>
        <end position="26"/>
    </location>
</feature>
<feature type="region of interest" description="Disordered" evidence="3">
    <location>
        <begin position="46"/>
        <end position="175"/>
    </location>
</feature>
<feature type="region of interest" description="Disordered" evidence="3">
    <location>
        <begin position="374"/>
        <end position="420"/>
    </location>
</feature>
<feature type="region of interest" description="Disordered" evidence="3">
    <location>
        <begin position="686"/>
        <end position="723"/>
    </location>
</feature>
<feature type="region of interest" description="Disordered" evidence="3">
    <location>
        <begin position="736"/>
        <end position="776"/>
    </location>
</feature>
<feature type="region of interest" description="Disordered" evidence="3">
    <location>
        <begin position="824"/>
        <end position="843"/>
    </location>
</feature>
<feature type="region of interest" description="Disordered" evidence="3">
    <location>
        <begin position="889"/>
        <end position="949"/>
    </location>
</feature>
<feature type="region of interest" description="Disordered" evidence="3">
    <location>
        <begin position="1067"/>
        <end position="1111"/>
    </location>
</feature>
<feature type="region of interest" description="Disordered" evidence="3">
    <location>
        <begin position="1367"/>
        <end position="1392"/>
    </location>
</feature>
<feature type="region of interest" description="Disordered" evidence="3">
    <location>
        <begin position="1589"/>
        <end position="1620"/>
    </location>
</feature>
<feature type="region of interest" description="Disordered" evidence="3">
    <location>
        <begin position="1643"/>
        <end position="1736"/>
    </location>
</feature>
<feature type="compositionally biased region" description="Basic and acidic residues" evidence="3">
    <location>
        <begin position="77"/>
        <end position="88"/>
    </location>
</feature>
<feature type="compositionally biased region" description="Basic and acidic residues" evidence="3">
    <location>
        <begin position="137"/>
        <end position="160"/>
    </location>
</feature>
<feature type="compositionally biased region" description="Polar residues" evidence="3">
    <location>
        <begin position="161"/>
        <end position="171"/>
    </location>
</feature>
<feature type="compositionally biased region" description="Pro residues" evidence="3">
    <location>
        <begin position="387"/>
        <end position="396"/>
    </location>
</feature>
<feature type="compositionally biased region" description="Low complexity" evidence="3">
    <location>
        <begin position="397"/>
        <end position="406"/>
    </location>
</feature>
<feature type="compositionally biased region" description="Pro residues" evidence="3">
    <location>
        <begin position="407"/>
        <end position="417"/>
    </location>
</feature>
<feature type="compositionally biased region" description="Basic residues" evidence="3">
    <location>
        <begin position="687"/>
        <end position="698"/>
    </location>
</feature>
<feature type="compositionally biased region" description="Low complexity" evidence="3">
    <location>
        <begin position="699"/>
        <end position="712"/>
    </location>
</feature>
<feature type="compositionally biased region" description="Low complexity" evidence="3">
    <location>
        <begin position="736"/>
        <end position="764"/>
    </location>
</feature>
<feature type="compositionally biased region" description="Basic and acidic residues" evidence="3">
    <location>
        <begin position="925"/>
        <end position="939"/>
    </location>
</feature>
<feature type="compositionally biased region" description="Pro residues" evidence="3">
    <location>
        <begin position="1081"/>
        <end position="1091"/>
    </location>
</feature>
<feature type="compositionally biased region" description="Low complexity" evidence="3">
    <location>
        <begin position="1655"/>
        <end position="1673"/>
    </location>
</feature>
<feature type="compositionally biased region" description="Acidic residues" evidence="3">
    <location>
        <begin position="1674"/>
        <end position="1723"/>
    </location>
</feature>
<feature type="compositionally biased region" description="Low complexity" evidence="3">
    <location>
        <begin position="1724"/>
        <end position="1736"/>
    </location>
</feature>
<feature type="modified residue" description="Phosphoserine" evidence="1">
    <location>
        <position position="720"/>
    </location>
</feature>
<feature type="modified residue" description="Phosphoserine" evidence="1">
    <location>
        <position position="721"/>
    </location>
</feature>
<feature type="modified residue" description="Phosphoserine" evidence="10">
    <location>
        <position position="981"/>
    </location>
</feature>
<feature type="cross-link" description="Glycyl lysine isopeptide (Lys-Gly) (interchain with G-Cter in SUMO2)" evidence="11">
    <location>
        <position position="288"/>
    </location>
</feature>
<feature type="cross-link" description="Glycyl lysine isopeptide (Lys-Gly) (interchain with G-Cter in SUMO2)" evidence="11">
    <location>
        <position position="975"/>
    </location>
</feature>
<feature type="splice variant" id="VSP_027093" description="In isoform 2." evidence="7 8">
    <original>N</original>
    <variation>K</variation>
    <location>
        <position position="1166"/>
    </location>
</feature>
<feature type="splice variant" id="VSP_027094" description="In isoform 2." evidence="7 8">
    <location>
        <begin position="1167"/>
        <end position="1759"/>
    </location>
</feature>
<feature type="sequence variant" id="VAR_077466" description="Found in a patient with congenital heart defect; uncertain significance; severe decrease of positive regulation of transcription from TH promoter." evidence="6">
    <original>L</original>
    <variation>P</variation>
    <location>
        <position position="38"/>
    </location>
</feature>
<feature type="sequence conflict" description="In Ref. 2; ABB29845." evidence="9" ref="2">
    <original>D</original>
    <variation>N</variation>
    <location>
        <position position="192"/>
    </location>
</feature>
<feature type="sequence conflict" description="In Ref. 2; ABB29845." evidence="9" ref="2">
    <original>L</original>
    <variation>P</variation>
    <location>
        <position position="273"/>
    </location>
</feature>
<feature type="sequence conflict" description="In Ref. 4; BAA91089." evidence="9" ref="4">
    <original>S</original>
    <variation>N</variation>
    <location>
        <position position="408"/>
    </location>
</feature>
<feature type="sequence conflict" description="In Ref. 2; ABB29845." evidence="9" ref="2">
    <original>Y</original>
    <variation>H</variation>
    <location>
        <position position="486"/>
    </location>
</feature>
<feature type="sequence conflict" description="In Ref. 2; ABB29845." evidence="9" ref="2">
    <original>K</original>
    <variation>E</variation>
    <location>
        <position position="650"/>
    </location>
</feature>
<feature type="sequence conflict" description="In Ref. 3; AAH51883." evidence="9" ref="3">
    <original>L</original>
    <variation>P</variation>
    <location>
        <position position="813"/>
    </location>
</feature>
<feature type="sequence conflict" description="In Ref. 2; ABB29845." evidence="9" ref="2">
    <original>M</original>
    <variation>T</variation>
    <location>
        <position position="961"/>
    </location>
</feature>
<feature type="sequence conflict" description="In Ref. 2; ABB29845." evidence="9" ref="2">
    <original>F</original>
    <variation>S</variation>
    <location>
        <position position="989"/>
    </location>
</feature>
<feature type="sequence conflict" description="In Ref. 4; BAA91089." evidence="9" ref="4">
    <original>G</original>
    <variation>E</variation>
    <location>
        <position position="1061"/>
    </location>
</feature>
<feature type="sequence conflict" description="In Ref. 2; ABB29845." evidence="9" ref="2">
    <original>N</original>
    <variation>S</variation>
    <location>
        <position position="1297"/>
    </location>
</feature>
<feature type="sequence conflict" description="In Ref. 2; ABB29845." evidence="9" ref="2">
    <original>C</original>
    <variation>R</variation>
    <location>
        <position position="1501"/>
    </location>
</feature>
<feature type="sequence conflict" description="In Ref. 2; ABB29845." evidence="9" ref="2">
    <original>C</original>
    <variation>R</variation>
    <location>
        <position position="1549"/>
    </location>
</feature>
<sequence>MDLGTAEGTRCTDPPAGKPAMAPKRKGGLKLNAICAKLSRQVVVEKRADAGSHTEGSPSQPRDQERSGPESGAARAPRSEEDKRRAVIEKWVNGEYSEEPAPTPVLGRIAREGLELPPEGVYMVQPQGCSDEEDHAEEPSKDGGALEEKDSDGAASKEDSGPSTRQASGEASSLRDYAASTMTEFLGMFGYDDQNTRDELARKISFEKLHAGSTPEAATSSMLPTSEDTLSKRARFSKYEEYIRKLKAGEQLSWPAPSTKTEERVGKEVVGTLPGLRLPSSTAHLETKATILPLPSHSSVQMQNLVARASKYDFFIQKLKTGENLRPQNGSTYKKPSKYDLENVKYLHLFKPGEGSPDMGGAIAFKTGKVGRPSKYDVRGIQKPGPAKVPPTPSLAPAPLASVPSAPSAPGPGPEPPASLSFNTPEYLKSTFSKTDSITTGTVSTVKNGLPTDKPAVTEDVNIYQKYIARFSGSQHCGHIHCAYQYREHYHCLDPECNYQRFTSKQDVIRHYNMHKKRDNSLQHGFMRFSPLDDCSVYYHGCHLNGKSTHYHCMQVGCNKVYTSTSDVMTHENFHKKNTQLINDGFQRFRATEDCGTADCQFYGQKTTHFHCRRPGCTFTFKNKCDIEKHKSYHIKDDAYAKDGFKKFYKYEECKYEGCVYSKATNHFHCIRAGCGFTFTSTSQMTSHKRKHERRHIRSSGALGLPPSLLGAKDTEHEESSNDDLVDFSALSSKNSSLSASPTSQQSSASLAAATAATEAGPSATKPPNSKISGLLPQGLPGSIPLALALSNSGLPTPTPYFPILAGRGSTSLPVGTPSLLGAVSSGSAASATPDTPTLVASGAGDSAPVAAASVPAPPASIMERISASKGLISPMMARLAAAALKPSATFDPGSGQQVTPARFPPAQVKPEPGESTGAPGPHEASQDRSLDLTVKEPSNESNGHAVPANSSLLSSLMNKMSQGNPGLGSLLNIKAEAEGSPAAEPSPFLGKAVKALVQEKLAEPWKVYLRRFGTKDFCDGQCDFLHKAHFHCVVEECGALFSTLDGAIKHANFHFRTEGGAAKGNTEAAFPASAAETKPPMAPSSPPVPPVTTATVSSLEGPAPSPASVPSTPTLLAWKQLASTIPQMPQIPASVPHLPASPLATTSLENAKPQVKPGFLQFQENDPCLATDCKYANKFHFHCLFGNCKYVCKTSGKAESHCLDHINPNNNLVNVRDQFAYYSLQCLCPNQHCEFRMRGHYHCLRTGCYFVTNITTKLPWHIKKHEKAERRAANGFKYFTKREECGRLGCKYNQVNSHFHCIREGCQFSFLLKHQMTSHARKHMRRMLGKNFDRVPPSQGPPGLMDAETDECMDYTGCSPGAMSSESSTMDRSCSSTPVGNESTAAGNTISMPTASGAKKRFWIIEDMSPFGKRRKTASSRKMLDEGMMLEGFRRFDLYEDCKDAACQFSLKVTHYHCTRENCGYKFCGRTHMYKHAQHHDRVDNLVLDDFKRFKASLSCHFADCPFSGTSTHFHCLRCRFRCTDSTKVTAHRKHHGKQDVISAAGFCQFSSSADCAVPDCKYKLKCSHFHCTFPGCRHTVVGMSQMDSHKRKHEKQERGEPAAEGPAPGPPISLDGSLSLGAEPGSLLFLQSAAAGLGLALGDAGDPGPPDAAAPGPREGAAAAAAAAGESSQEDEEEELELPEEEAEDDEDEDDDEDDDDEDDDEDDDDEDLRTDSEESLPEAAAEAAGAGARTPALAALAALGAPGPAPTAASSP</sequence>
<keyword id="KW-0025">Alternative splicing</keyword>
<keyword id="KW-0217">Developmental protein</keyword>
<keyword id="KW-0238">DNA-binding</keyword>
<keyword id="KW-1017">Isopeptide bond</keyword>
<keyword id="KW-0479">Metal-binding</keyword>
<keyword id="KW-0539">Nucleus</keyword>
<keyword id="KW-0597">Phosphoprotein</keyword>
<keyword id="KW-1267">Proteomics identification</keyword>
<keyword id="KW-1185">Reference proteome</keyword>
<keyword id="KW-0677">Repeat</keyword>
<keyword id="KW-0804">Transcription</keyword>
<keyword id="KW-0805">Transcription regulation</keyword>
<keyword id="KW-0832">Ubl conjugation</keyword>
<keyword id="KW-0862">Zinc</keyword>
<keyword id="KW-0863">Zinc-finger</keyword>
<dbReference type="EMBL" id="DQ372703">
    <property type="protein sequence ID" value="ABD14411.1"/>
    <property type="status" value="ALT_SEQ"/>
    <property type="molecule type" value="mRNA"/>
</dbReference>
<dbReference type="EMBL" id="DQ217660">
    <property type="protein sequence ID" value="ABB29845.1"/>
    <property type="molecule type" value="mRNA"/>
</dbReference>
<dbReference type="EMBL" id="AL139423">
    <property type="status" value="NOT_ANNOTATED_CDS"/>
    <property type="molecule type" value="Genomic_DNA"/>
</dbReference>
<dbReference type="EMBL" id="BC004410">
    <property type="protein sequence ID" value="AAH04410.2"/>
    <property type="molecule type" value="mRNA"/>
</dbReference>
<dbReference type="EMBL" id="BC051883">
    <property type="protein sequence ID" value="AAH51883.2"/>
    <property type="molecule type" value="mRNA"/>
</dbReference>
<dbReference type="EMBL" id="AK000328">
    <property type="protein sequence ID" value="BAA91089.1"/>
    <property type="status" value="ALT_INIT"/>
    <property type="molecule type" value="mRNA"/>
</dbReference>
<dbReference type="EMBL" id="AK130996">
    <property type="protein sequence ID" value="BAC85474.1"/>
    <property type="status" value="ALT_SEQ"/>
    <property type="molecule type" value="mRNA"/>
</dbReference>
<dbReference type="CCDS" id="CCDS120.2">
    <molecule id="Q86V15-2"/>
</dbReference>
<dbReference type="CCDS" id="CCDS41246.1">
    <molecule id="Q86V15-1"/>
</dbReference>
<dbReference type="RefSeq" id="NP_001073312.1">
    <molecule id="Q86V15-1"/>
    <property type="nucleotide sequence ID" value="NM_001079843.3"/>
</dbReference>
<dbReference type="RefSeq" id="NP_060236.3">
    <molecule id="Q86V15-2"/>
    <property type="nucleotide sequence ID" value="NM_017766.4"/>
</dbReference>
<dbReference type="BioGRID" id="120243">
    <property type="interactions" value="40"/>
</dbReference>
<dbReference type="FunCoup" id="Q86V15">
    <property type="interactions" value="2354"/>
</dbReference>
<dbReference type="IntAct" id="Q86V15">
    <property type="interactions" value="18"/>
</dbReference>
<dbReference type="MINT" id="Q86V15"/>
<dbReference type="STRING" id="9606.ENSP00000366221"/>
<dbReference type="GlyGen" id="Q86V15">
    <property type="glycosylation" value="16 sites, 1 O-linked glycan (10 sites)"/>
</dbReference>
<dbReference type="iPTMnet" id="Q86V15"/>
<dbReference type="PhosphoSitePlus" id="Q86V15"/>
<dbReference type="SwissPalm" id="Q86V15"/>
<dbReference type="BioMuta" id="CASZ1"/>
<dbReference type="DMDM" id="300669712"/>
<dbReference type="jPOST" id="Q86V15"/>
<dbReference type="MassIVE" id="Q86V15"/>
<dbReference type="PaxDb" id="9606-ENSP00000366221"/>
<dbReference type="PeptideAtlas" id="Q86V15"/>
<dbReference type="ProteomicsDB" id="69945">
    <molecule id="Q86V15-1"/>
</dbReference>
<dbReference type="ProteomicsDB" id="69946">
    <molecule id="Q86V15-2"/>
</dbReference>
<dbReference type="Antibodypedia" id="27940">
    <property type="antibodies" value="167 antibodies from 26 providers"/>
</dbReference>
<dbReference type="DNASU" id="54897"/>
<dbReference type="Ensembl" id="ENST00000344008.5">
    <molecule id="Q86V15-2"/>
    <property type="protein sequence ID" value="ENSP00000339445.5"/>
    <property type="gene ID" value="ENSG00000130940.15"/>
</dbReference>
<dbReference type="Ensembl" id="ENST00000377022.8">
    <molecule id="Q86V15-1"/>
    <property type="protein sequence ID" value="ENSP00000366221.3"/>
    <property type="gene ID" value="ENSG00000130940.15"/>
</dbReference>
<dbReference type="GeneID" id="54897"/>
<dbReference type="KEGG" id="hsa:54897"/>
<dbReference type="MANE-Select" id="ENST00000377022.8">
    <property type="protein sequence ID" value="ENSP00000366221.3"/>
    <property type="RefSeq nucleotide sequence ID" value="NM_001079843.3"/>
    <property type="RefSeq protein sequence ID" value="NP_001073312.1"/>
</dbReference>
<dbReference type="UCSC" id="uc001aro.6">
    <molecule id="Q86V15-1"/>
    <property type="organism name" value="human"/>
</dbReference>
<dbReference type="AGR" id="HGNC:26002"/>
<dbReference type="CTD" id="54897"/>
<dbReference type="DisGeNET" id="54897"/>
<dbReference type="GeneCards" id="CASZ1"/>
<dbReference type="HGNC" id="HGNC:26002">
    <property type="gene designation" value="CASZ1"/>
</dbReference>
<dbReference type="HPA" id="ENSG00000130940">
    <property type="expression patterns" value="Tissue enhanced (skin)"/>
</dbReference>
<dbReference type="MalaCards" id="CASZ1"/>
<dbReference type="MIM" id="609895">
    <property type="type" value="gene"/>
</dbReference>
<dbReference type="neXtProt" id="NX_Q86V15"/>
<dbReference type="OpenTargets" id="ENSG00000130940"/>
<dbReference type="Orphanet" id="1606">
    <property type="disease" value="1p36 deletion syndrome"/>
</dbReference>
<dbReference type="PharmGKB" id="PA142672203"/>
<dbReference type="VEuPathDB" id="HostDB:ENSG00000130940"/>
<dbReference type="eggNOG" id="KOG4377">
    <property type="taxonomic scope" value="Eukaryota"/>
</dbReference>
<dbReference type="GeneTree" id="ENSGT00390000008187"/>
<dbReference type="HOGENOM" id="CLU_003385_0_0_1"/>
<dbReference type="InParanoid" id="Q86V15"/>
<dbReference type="OMA" id="GRACPHN"/>
<dbReference type="OrthoDB" id="10063916at2759"/>
<dbReference type="PAN-GO" id="Q86V15">
    <property type="GO annotations" value="5 GO annotations based on evolutionary models"/>
</dbReference>
<dbReference type="PhylomeDB" id="Q86V15"/>
<dbReference type="TreeFam" id="TF324787"/>
<dbReference type="PathwayCommons" id="Q86V15"/>
<dbReference type="SignaLink" id="Q86V15"/>
<dbReference type="SIGNOR" id="Q86V15"/>
<dbReference type="BioGRID-ORCS" id="54897">
    <property type="hits" value="27 hits in 1147 CRISPR screens"/>
</dbReference>
<dbReference type="ChiTaRS" id="CASZ1">
    <property type="organism name" value="human"/>
</dbReference>
<dbReference type="GeneWiki" id="CASZ1"/>
<dbReference type="GenomeRNAi" id="54897"/>
<dbReference type="Pharos" id="Q86V15">
    <property type="development level" value="Tbio"/>
</dbReference>
<dbReference type="PRO" id="PR:Q86V15"/>
<dbReference type="Proteomes" id="UP000005640">
    <property type="component" value="Chromosome 1"/>
</dbReference>
<dbReference type="RNAct" id="Q86V15">
    <property type="molecule type" value="protein"/>
</dbReference>
<dbReference type="Bgee" id="ENSG00000130940">
    <property type="expression patterns" value="Expressed in skin of leg and 178 other cell types or tissues"/>
</dbReference>
<dbReference type="ExpressionAtlas" id="Q86V15">
    <property type="expression patterns" value="baseline and differential"/>
</dbReference>
<dbReference type="GO" id="GO:0000785">
    <property type="term" value="C:chromatin"/>
    <property type="evidence" value="ECO:0000314"/>
    <property type="project" value="ARUK-UCL"/>
</dbReference>
<dbReference type="GO" id="GO:0005829">
    <property type="term" value="C:cytosol"/>
    <property type="evidence" value="ECO:0000314"/>
    <property type="project" value="HPA"/>
</dbReference>
<dbReference type="GO" id="GO:0043231">
    <property type="term" value="C:intracellular membrane-bounded organelle"/>
    <property type="evidence" value="ECO:0000314"/>
    <property type="project" value="HPA"/>
</dbReference>
<dbReference type="GO" id="GO:0005654">
    <property type="term" value="C:nucleoplasm"/>
    <property type="evidence" value="ECO:0000314"/>
    <property type="project" value="HPA"/>
</dbReference>
<dbReference type="GO" id="GO:0005634">
    <property type="term" value="C:nucleus"/>
    <property type="evidence" value="ECO:0000318"/>
    <property type="project" value="GO_Central"/>
</dbReference>
<dbReference type="GO" id="GO:0001228">
    <property type="term" value="F:DNA-binding transcription activator activity, RNA polymerase II-specific"/>
    <property type="evidence" value="ECO:0000314"/>
    <property type="project" value="ARUK-UCL"/>
</dbReference>
<dbReference type="GO" id="GO:0000981">
    <property type="term" value="F:DNA-binding transcription factor activity, RNA polymerase II-specific"/>
    <property type="evidence" value="ECO:0000318"/>
    <property type="project" value="GO_Central"/>
</dbReference>
<dbReference type="GO" id="GO:0000977">
    <property type="term" value="F:RNA polymerase II transcription regulatory region sequence-specific DNA binding"/>
    <property type="evidence" value="ECO:0000314"/>
    <property type="project" value="ARUK-UCL"/>
</dbReference>
<dbReference type="GO" id="GO:0008270">
    <property type="term" value="F:zinc ion binding"/>
    <property type="evidence" value="ECO:0007669"/>
    <property type="project" value="UniProtKB-KW"/>
</dbReference>
<dbReference type="GO" id="GO:0045893">
    <property type="term" value="P:positive regulation of DNA-templated transcription"/>
    <property type="evidence" value="ECO:0000314"/>
    <property type="project" value="UniProtKB"/>
</dbReference>
<dbReference type="GO" id="GO:0045944">
    <property type="term" value="P:positive regulation of transcription by RNA polymerase II"/>
    <property type="evidence" value="ECO:0000314"/>
    <property type="project" value="ARUK-UCL"/>
</dbReference>
<dbReference type="GO" id="GO:0045664">
    <property type="term" value="P:regulation of neuron differentiation"/>
    <property type="evidence" value="ECO:0000318"/>
    <property type="project" value="GO_Central"/>
</dbReference>
<dbReference type="InterPro" id="IPR040373">
    <property type="entry name" value="CASZ1"/>
</dbReference>
<dbReference type="InterPro" id="IPR013087">
    <property type="entry name" value="Znf_C2H2_type"/>
</dbReference>
<dbReference type="PANTHER" id="PTHR12451">
    <property type="entry name" value="TRANSCRIPTION FACTOR CASTOR PROTEIN MING -RELATED"/>
    <property type="match status" value="1"/>
</dbReference>
<dbReference type="PANTHER" id="PTHR12451:SF0">
    <property type="entry name" value="ZINC FINGER PROTEIN CASTOR HOMOLOG 1"/>
    <property type="match status" value="1"/>
</dbReference>
<dbReference type="SMART" id="SM00355">
    <property type="entry name" value="ZnF_C2H2"/>
    <property type="match status" value="11"/>
</dbReference>
<dbReference type="PROSITE" id="PS00028">
    <property type="entry name" value="ZINC_FINGER_C2H2_1"/>
    <property type="match status" value="9"/>
</dbReference>
<dbReference type="PROSITE" id="PS50157">
    <property type="entry name" value="ZINC_FINGER_C2H2_2"/>
    <property type="match status" value="3"/>
</dbReference>
<name>CASZ1_HUMAN</name>